<name>TORY_HAEIN</name>
<protein>
    <recommendedName>
        <fullName>Cytochrome c-type protein TorY</fullName>
    </recommendedName>
</protein>
<organism>
    <name type="scientific">Haemophilus influenzae (strain ATCC 51907 / DSM 11121 / KW20 / Rd)</name>
    <dbReference type="NCBI Taxonomy" id="71421"/>
    <lineage>
        <taxon>Bacteria</taxon>
        <taxon>Pseudomonadati</taxon>
        <taxon>Pseudomonadota</taxon>
        <taxon>Gammaproteobacteria</taxon>
        <taxon>Pasteurellales</taxon>
        <taxon>Pasteurellaceae</taxon>
        <taxon>Haemophilus</taxon>
    </lineage>
</organism>
<reference key="1">
    <citation type="journal article" date="1995" name="Science">
        <title>Whole-genome random sequencing and assembly of Haemophilus influenzae Rd.</title>
        <authorList>
            <person name="Fleischmann R.D."/>
            <person name="Adams M.D."/>
            <person name="White O."/>
            <person name="Clayton R.A."/>
            <person name="Kirkness E.F."/>
            <person name="Kerlavage A.R."/>
            <person name="Bult C.J."/>
            <person name="Tomb J.-F."/>
            <person name="Dougherty B.A."/>
            <person name="Merrick J.M."/>
            <person name="McKenney K."/>
            <person name="Sutton G.G."/>
            <person name="FitzHugh W."/>
            <person name="Fields C.A."/>
            <person name="Gocayne J.D."/>
            <person name="Scott J.D."/>
            <person name="Shirley R."/>
            <person name="Liu L.-I."/>
            <person name="Glodek A."/>
            <person name="Kelley J.M."/>
            <person name="Weidman J.F."/>
            <person name="Phillips C.A."/>
            <person name="Spriggs T."/>
            <person name="Hedblom E."/>
            <person name="Cotton M.D."/>
            <person name="Utterback T.R."/>
            <person name="Hanna M.C."/>
            <person name="Nguyen D.T."/>
            <person name="Saudek D.M."/>
            <person name="Brandon R.C."/>
            <person name="Fine L.D."/>
            <person name="Fritchman J.L."/>
            <person name="Fuhrmann J.L."/>
            <person name="Geoghagen N.S.M."/>
            <person name="Gnehm C.L."/>
            <person name="McDonald L.A."/>
            <person name="Small K.V."/>
            <person name="Fraser C.M."/>
            <person name="Smith H.O."/>
            <person name="Venter J.C."/>
        </authorList>
    </citation>
    <scope>NUCLEOTIDE SEQUENCE [LARGE SCALE GENOMIC DNA]</scope>
    <source>
        <strain>ATCC 51907 / DSM 11121 / KW20 / Rd</strain>
    </source>
</reference>
<comment type="function">
    <text evidence="1">Part of the anaerobic respiratory chain of trimethylamine-N-oxide reductase TorZ. Required for electron transfer to the TorZ terminal enzyme (By similarity).</text>
</comment>
<comment type="subcellular location">
    <subcellularLocation>
        <location evidence="1">Cell inner membrane</location>
        <topology evidence="1">Single-pass type II membrane protein</topology>
    </subcellularLocation>
</comment>
<comment type="PTM">
    <text evidence="1">Binds 5 heme groups per subunit.</text>
</comment>
<comment type="similarity">
    <text evidence="3">Belongs to the TorC/TorY family.</text>
</comment>
<feature type="chain" id="PRO_0000108431" description="Cytochrome c-type protein TorY">
    <location>
        <begin position="1"/>
        <end position="368"/>
    </location>
</feature>
<feature type="topological domain" description="Cytoplasmic" evidence="2">
    <location>
        <begin position="1"/>
        <end position="8"/>
    </location>
</feature>
<feature type="transmembrane region" description="Helical" evidence="2">
    <location>
        <begin position="9"/>
        <end position="25"/>
    </location>
</feature>
<feature type="topological domain" description="Periplasmic" evidence="2">
    <location>
        <begin position="26"/>
        <end position="368"/>
    </location>
</feature>
<feature type="binding site" description="covalent" evidence="1">
    <location>
        <position position="39"/>
    </location>
    <ligand>
        <name>heme</name>
        <dbReference type="ChEBI" id="CHEBI:30413"/>
        <label>1</label>
    </ligand>
</feature>
<feature type="binding site" description="covalent" evidence="1">
    <location>
        <position position="42"/>
    </location>
    <ligand>
        <name>heme</name>
        <dbReference type="ChEBI" id="CHEBI:30413"/>
        <label>1</label>
    </ligand>
</feature>
<feature type="binding site" description="axial binding residue" evidence="1">
    <location>
        <position position="43"/>
    </location>
    <ligand>
        <name>heme</name>
        <dbReference type="ChEBI" id="CHEBI:30413"/>
        <label>1</label>
    </ligand>
    <ligandPart>
        <name>Fe</name>
        <dbReference type="ChEBI" id="CHEBI:18248"/>
    </ligandPart>
</feature>
<feature type="binding site" description="covalent" evidence="1">
    <location>
        <position position="68"/>
    </location>
    <ligand>
        <name>heme</name>
        <dbReference type="ChEBI" id="CHEBI:30413"/>
        <label>2</label>
    </ligand>
</feature>
<feature type="binding site" description="covalent" evidence="1">
    <location>
        <position position="71"/>
    </location>
    <ligand>
        <name>heme</name>
        <dbReference type="ChEBI" id="CHEBI:30413"/>
        <label>2</label>
    </ligand>
</feature>
<feature type="binding site" description="axial binding residue" evidence="1">
    <location>
        <position position="72"/>
    </location>
    <ligand>
        <name>heme</name>
        <dbReference type="ChEBI" id="CHEBI:30413"/>
        <label>2</label>
    </ligand>
    <ligandPart>
        <name>Fe</name>
        <dbReference type="ChEBI" id="CHEBI:18248"/>
    </ligandPart>
</feature>
<feature type="binding site" description="covalent" evidence="1">
    <location>
        <position position="128"/>
    </location>
    <ligand>
        <name>heme</name>
        <dbReference type="ChEBI" id="CHEBI:30413"/>
        <label>3</label>
    </ligand>
</feature>
<feature type="binding site" description="covalent" evidence="1">
    <location>
        <position position="131"/>
    </location>
    <ligand>
        <name>heme</name>
        <dbReference type="ChEBI" id="CHEBI:30413"/>
        <label>3</label>
    </ligand>
</feature>
<feature type="binding site" description="axial binding residue" evidence="1">
    <location>
        <position position="132"/>
    </location>
    <ligand>
        <name>heme</name>
        <dbReference type="ChEBI" id="CHEBI:30413"/>
        <label>3</label>
    </ligand>
    <ligandPart>
        <name>Fe</name>
        <dbReference type="ChEBI" id="CHEBI:18248"/>
    </ligandPart>
</feature>
<feature type="binding site" description="covalent" evidence="1">
    <location>
        <position position="160"/>
    </location>
    <ligand>
        <name>heme</name>
        <dbReference type="ChEBI" id="CHEBI:30413"/>
        <label>4</label>
    </ligand>
</feature>
<feature type="binding site" description="covalent" evidence="1">
    <location>
        <position position="163"/>
    </location>
    <ligand>
        <name>heme</name>
        <dbReference type="ChEBI" id="CHEBI:30413"/>
        <label>4</label>
    </ligand>
</feature>
<feature type="binding site" description="axial binding residue" evidence="1">
    <location>
        <position position="164"/>
    </location>
    <ligand>
        <name>heme</name>
        <dbReference type="ChEBI" id="CHEBI:30413"/>
        <label>4</label>
    </ligand>
    <ligandPart>
        <name>Fe</name>
        <dbReference type="ChEBI" id="CHEBI:18248"/>
    </ligandPart>
</feature>
<feature type="binding site" description="covalent" evidence="1">
    <location>
        <position position="316"/>
    </location>
    <ligand>
        <name>heme</name>
        <dbReference type="ChEBI" id="CHEBI:30413"/>
        <label>5</label>
    </ligand>
</feature>
<feature type="binding site" description="covalent" evidence="1">
    <location>
        <position position="319"/>
    </location>
    <ligand>
        <name>heme</name>
        <dbReference type="ChEBI" id="CHEBI:30413"/>
        <label>5</label>
    </ligand>
</feature>
<feature type="binding site" description="axial binding residue" evidence="1">
    <location>
        <position position="320"/>
    </location>
    <ligand>
        <name>heme</name>
        <dbReference type="ChEBI" id="CHEBI:30413"/>
        <label>5</label>
    </ligand>
    <ligandPart>
        <name>Fe</name>
        <dbReference type="ChEBI" id="CHEBI:18248"/>
    </ligandPart>
</feature>
<sequence length="368" mass="41145">MAMSKMKKIVTALCLVGVGVGALWGSQWIMHKTSTPEFCASCHSMSYPQQEWEGSSHFANAKGVRAQCSDCHIPKEGWHYVKAKFIALKDLWYEAQGKIENKEKYEAHRAEMAQRVWKDMKANDSETCRSCHSFDAMELSKQTKLAKQTHTEAQTNGQTCIDCHKGIVHFLPEVHGDQNTQKSSAVQGGTLSDGSAIFATEMVKATNDKGNEVRLMPYAELMQWKVDGDQIQGTLHGWQQVGAEAVVYQELGKRITLALMDEDARNHVQVLKIVHDAVTDSDWKEISVAVNVAKEKMTSDLTTLNQYGNQLNQTQCSGCHAAIGADHYTANQWIGVVNSMKDRTSMKKDEVRALTIYLQRNAKDMAKQ</sequence>
<keyword id="KW-0997">Cell inner membrane</keyword>
<keyword id="KW-1003">Cell membrane</keyword>
<keyword id="KW-0249">Electron transport</keyword>
<keyword id="KW-0349">Heme</keyword>
<keyword id="KW-0408">Iron</keyword>
<keyword id="KW-0472">Membrane</keyword>
<keyword id="KW-0479">Metal-binding</keyword>
<keyword id="KW-1185">Reference proteome</keyword>
<keyword id="KW-0812">Transmembrane</keyword>
<keyword id="KW-1133">Transmembrane helix</keyword>
<keyword id="KW-0813">Transport</keyword>
<dbReference type="EMBL" id="L42023">
    <property type="protein sequence ID" value="AAC22304.1"/>
    <property type="molecule type" value="Genomic_DNA"/>
</dbReference>
<dbReference type="PIR" id="I64083">
    <property type="entry name" value="I64083"/>
</dbReference>
<dbReference type="RefSeq" id="NP_438804.2">
    <property type="nucleotide sequence ID" value="NC_000907.1"/>
</dbReference>
<dbReference type="STRING" id="71421.HI_0644"/>
<dbReference type="TCDB" id="5.A.3.4.4">
    <property type="family name" value="the prokaryotic molybdopterin-containing oxidoreductase (pmo) family"/>
</dbReference>
<dbReference type="EnsemblBacteria" id="AAC22304">
    <property type="protein sequence ID" value="AAC22304"/>
    <property type="gene ID" value="HI_0644"/>
</dbReference>
<dbReference type="KEGG" id="hin:HI_0644"/>
<dbReference type="PATRIC" id="fig|71421.8.peg.673"/>
<dbReference type="eggNOG" id="COG3005">
    <property type="taxonomic scope" value="Bacteria"/>
</dbReference>
<dbReference type="HOGENOM" id="CLU_058814_0_0_6"/>
<dbReference type="OrthoDB" id="9782159at2"/>
<dbReference type="PhylomeDB" id="P44799"/>
<dbReference type="Proteomes" id="UP000000579">
    <property type="component" value="Chromosome"/>
</dbReference>
<dbReference type="GO" id="GO:0009276">
    <property type="term" value="C:Gram-negative-bacterium-type cell wall"/>
    <property type="evidence" value="ECO:0007669"/>
    <property type="project" value="InterPro"/>
</dbReference>
<dbReference type="GO" id="GO:0005886">
    <property type="term" value="C:plasma membrane"/>
    <property type="evidence" value="ECO:0007669"/>
    <property type="project" value="UniProtKB-SubCell"/>
</dbReference>
<dbReference type="GO" id="GO:0009055">
    <property type="term" value="F:electron transfer activity"/>
    <property type="evidence" value="ECO:0000318"/>
    <property type="project" value="GO_Central"/>
</dbReference>
<dbReference type="GO" id="GO:0020037">
    <property type="term" value="F:heme binding"/>
    <property type="evidence" value="ECO:0007669"/>
    <property type="project" value="InterPro"/>
</dbReference>
<dbReference type="GO" id="GO:0005506">
    <property type="term" value="F:iron ion binding"/>
    <property type="evidence" value="ECO:0007669"/>
    <property type="project" value="InterPro"/>
</dbReference>
<dbReference type="GO" id="GO:0009061">
    <property type="term" value="P:anaerobic respiration"/>
    <property type="evidence" value="ECO:0000318"/>
    <property type="project" value="GO_Central"/>
</dbReference>
<dbReference type="FunFam" id="1.10.3820.10:FF:000001">
    <property type="entry name" value="Cytochrome c-type protein"/>
    <property type="match status" value="1"/>
</dbReference>
<dbReference type="Gene3D" id="1.10.3820.10">
    <property type="entry name" value="Di-heme elbow motif domain"/>
    <property type="match status" value="1"/>
</dbReference>
<dbReference type="InterPro" id="IPR036909">
    <property type="entry name" value="Cyt_c-like_dom_sf"/>
</dbReference>
<dbReference type="InterPro" id="IPR051174">
    <property type="entry name" value="Cytochrome_c-type_ET"/>
</dbReference>
<dbReference type="InterPro" id="IPR009154">
    <property type="entry name" value="Membr-bd_4haem_cyt_TorC"/>
</dbReference>
<dbReference type="InterPro" id="IPR036280">
    <property type="entry name" value="Multihaem_cyt_sf"/>
</dbReference>
<dbReference type="InterPro" id="IPR005126">
    <property type="entry name" value="NapC/NirT_cyt_c_N"/>
</dbReference>
<dbReference type="InterPro" id="IPR038266">
    <property type="entry name" value="NapC/NirT_cytc_sf"/>
</dbReference>
<dbReference type="PANTHER" id="PTHR30333">
    <property type="entry name" value="CYTOCHROME C-TYPE PROTEIN"/>
    <property type="match status" value="1"/>
</dbReference>
<dbReference type="PANTHER" id="PTHR30333:SF3">
    <property type="entry name" value="CYTOCHROME C-TYPE PROTEIN TORY"/>
    <property type="match status" value="1"/>
</dbReference>
<dbReference type="Pfam" id="PF03264">
    <property type="entry name" value="Cytochrom_NNT"/>
    <property type="match status" value="1"/>
</dbReference>
<dbReference type="PIRSF" id="PIRSF000014">
    <property type="entry name" value="4_hem_cytch_TorC"/>
    <property type="match status" value="1"/>
</dbReference>
<dbReference type="SUPFAM" id="SSF46626">
    <property type="entry name" value="Cytochrome c"/>
    <property type="match status" value="1"/>
</dbReference>
<dbReference type="SUPFAM" id="SSF48695">
    <property type="entry name" value="Multiheme cytochromes"/>
    <property type="match status" value="1"/>
</dbReference>
<dbReference type="PROSITE" id="PS51008">
    <property type="entry name" value="MULTIHEME_CYTC"/>
    <property type="match status" value="2"/>
</dbReference>
<gene>
    <name type="primary">torY</name>
    <name type="ordered locus">HI_0644</name>
</gene>
<evidence type="ECO:0000250" key="1"/>
<evidence type="ECO:0000255" key="2"/>
<evidence type="ECO:0000305" key="3"/>
<accession>P44799</accession>
<proteinExistence type="inferred from homology"/>